<comment type="function">
    <text evidence="1 2 3 4">Capsid decoration protein that binds as a monomer at the center of each major capsid protein hexamer once maturation and expension of the capsid has occured. It only has a marginal effect on head stability. Dispensable for the head morphogenesis and phage infection.</text>
</comment>
<comment type="subunit">
    <text evidence="1 2 3 5">Monomer (PubMed:1469720). Interacts with the major capsid protein; one hoc molecule associates with each hexamer facet (PubMed:11162794, PubMed:1469720, PubMed:20497329).</text>
</comment>
<comment type="subcellular location">
    <subcellularLocation>
        <location evidence="1 2 4">Virion</location>
    </subcellularLocation>
    <text evidence="4">The Hoc protein is the most prominent feature at the virion surface. There are 155 copies on the capsid.</text>
</comment>
<comment type="similarity">
    <text evidence="1">Belongs to the Tevenvirinae Hoc family.</text>
</comment>
<dbReference type="EMBL" id="X14869">
    <property type="protein sequence ID" value="CAA33010.1"/>
    <property type="molecule type" value="Genomic_DNA"/>
</dbReference>
<dbReference type="EMBL" id="AF158101">
    <property type="protein sequence ID" value="AAD42581.1"/>
    <property type="molecule type" value="Genomic_DNA"/>
</dbReference>
<dbReference type="PIR" id="JQ0566">
    <property type="entry name" value="ZXBPH4"/>
</dbReference>
<dbReference type="RefSeq" id="NP_049793.1">
    <property type="nucleotide sequence ID" value="NC_000866.4"/>
</dbReference>
<dbReference type="PDB" id="5VF3">
    <property type="method" value="EM"/>
    <property type="resolution" value="3.30 A"/>
    <property type="chains" value="Z=1-376"/>
</dbReference>
<dbReference type="PDB" id="8T1X">
    <property type="method" value="EM"/>
    <property type="resolution" value="3.30 A"/>
    <property type="chains" value="X/Y=1-376"/>
</dbReference>
<dbReference type="PDB" id="8T9R">
    <property type="method" value="EM"/>
    <property type="resolution" value="3.40 A"/>
    <property type="chains" value="X/Y=1-376"/>
</dbReference>
<dbReference type="PDBsum" id="5VF3"/>
<dbReference type="PDBsum" id="8T1X"/>
<dbReference type="PDBsum" id="8T9R"/>
<dbReference type="EMDB" id="EMD-8661"/>
<dbReference type="SMR" id="P18056"/>
<dbReference type="GeneID" id="1258642"/>
<dbReference type="KEGG" id="vg:1258642"/>
<dbReference type="OrthoDB" id="6682at10239"/>
<dbReference type="Proteomes" id="UP000009087">
    <property type="component" value="Segment"/>
</dbReference>
<dbReference type="GO" id="GO:0098021">
    <property type="term" value="C:viral capsid, decoration"/>
    <property type="evidence" value="ECO:0007669"/>
    <property type="project" value="UniProtKB-UniRule"/>
</dbReference>
<dbReference type="FunFam" id="2.60.40.10:FF:003035">
    <property type="entry name" value="Highly immunogenic outer capsid protein"/>
    <property type="match status" value="1"/>
</dbReference>
<dbReference type="Gene3D" id="2.60.40.10">
    <property type="entry name" value="Immunoglobulins"/>
    <property type="match status" value="2"/>
</dbReference>
<dbReference type="HAMAP" id="MF_04116">
    <property type="entry name" value="HOC_T4"/>
    <property type="match status" value="1"/>
</dbReference>
<dbReference type="InterPro" id="IPR038998">
    <property type="entry name" value="HOC"/>
</dbReference>
<dbReference type="InterPro" id="IPR007110">
    <property type="entry name" value="Ig-like_dom"/>
</dbReference>
<dbReference type="InterPro" id="IPR036179">
    <property type="entry name" value="Ig-like_dom_sf"/>
</dbReference>
<dbReference type="InterPro" id="IPR013783">
    <property type="entry name" value="Ig-like_fold"/>
</dbReference>
<dbReference type="InterPro" id="IPR022409">
    <property type="entry name" value="PKD/Chitinase_dom"/>
</dbReference>
<dbReference type="InterPro" id="IPR000601">
    <property type="entry name" value="PKD_dom"/>
</dbReference>
<dbReference type="InterPro" id="IPR035986">
    <property type="entry name" value="PKD_dom_sf"/>
</dbReference>
<dbReference type="Pfam" id="PF00801">
    <property type="entry name" value="PKD"/>
    <property type="match status" value="1"/>
</dbReference>
<dbReference type="SMART" id="SM00089">
    <property type="entry name" value="PKD"/>
    <property type="match status" value="2"/>
</dbReference>
<dbReference type="SUPFAM" id="SSF48726">
    <property type="entry name" value="Immunoglobulin"/>
    <property type="match status" value="1"/>
</dbReference>
<dbReference type="SUPFAM" id="SSF49299">
    <property type="entry name" value="PKD domain"/>
    <property type="match status" value="1"/>
</dbReference>
<gene>
    <name type="primary">hoc</name>
</gene>
<sequence length="376" mass="40387">MTFTVDITPKTPTGVIDETKQFTATPSGQTGGGTITYAWSVDNVPQDGAEATFSYVLKGPAGQKTIKVVATNTLSEGGPETAEATTTITVKNKTQTTTLAVTPASPAAGVIGTPVQFTAALASQPDGASATYQWYVDDSQVGGETNSTFSYTPTTSGVKRIKCVAQVTATDYDALSVTSNEVSLTVNKKTMNPQVTLTPPSINVQQDASATFTANVTGAPEEAQITYSWKKDSSPVEGSTNVYTVDTSSVGSQTIEVTATVTAADYNPVTVTKTGNVTVTAKVAPEPEGELPYVHPLPHRSSAYIWCGWWVMDEIQKMTEEGKDWKTDDPDSKYYLHRYTLQKMMKDYPEVDVQESRNGYIIHKTALETGIIYTYP</sequence>
<evidence type="ECO:0000255" key="1">
    <source>
        <dbReference type="HAMAP-Rule" id="MF_04116"/>
    </source>
</evidence>
<evidence type="ECO:0000269" key="2">
    <source>
    </source>
</evidence>
<evidence type="ECO:0000269" key="3">
    <source>
    </source>
</evidence>
<evidence type="ECO:0000269" key="4">
    <source>
    </source>
</evidence>
<evidence type="ECO:0000269" key="5">
    <source>
    </source>
</evidence>
<evidence type="ECO:0007829" key="6">
    <source>
        <dbReference type="PDB" id="5VF3"/>
    </source>
</evidence>
<evidence type="ECO:0007829" key="7">
    <source>
        <dbReference type="PDB" id="8T1X"/>
    </source>
</evidence>
<reference key="1">
    <citation type="journal article" date="1990" name="Nucleic Acids Res.">
        <title>The nucleotide sequence of the region of bacteriophage T4 inh(lip)-hoc genes.</title>
        <authorList>
            <person name="Kaliman A.V."/>
            <person name="Khasanova M.A."/>
            <person name="Kryukov V.M."/>
            <person name="Tanyashin V.I."/>
            <person name="Bayev A.A."/>
        </authorList>
    </citation>
    <scope>NUCLEOTIDE SEQUENCE [GENOMIC DNA]</scope>
</reference>
<reference key="2">
    <citation type="journal article" date="2003" name="Microbiol. Mol. Biol. Rev.">
        <title>Bacteriophage T4 genome.</title>
        <authorList>
            <person name="Miller E.S."/>
            <person name="Kutter E."/>
            <person name="Mosig G."/>
            <person name="Arisaka F."/>
            <person name="Kunisawa T."/>
            <person name="Ruger W."/>
        </authorList>
    </citation>
    <scope>NUCLEOTIDE SEQUENCE [LARGE SCALE GENOMIC DNA]</scope>
</reference>
<reference key="3">
    <citation type="journal article" date="1992" name="J. Mol. Biol.">
        <title>Conformational changes of a viral capsid protein. Thermodynamic rationale for proteolytic regulation of bacteriophage T4 capsid expansion, co-operativity, and super-stabilization by soc binding.</title>
        <authorList>
            <person name="Steven A.C."/>
            <person name="Greenstone H.L."/>
            <person name="Booy F.P."/>
            <person name="Black L.W."/>
            <person name="Ross P.D."/>
        </authorList>
    </citation>
    <scope>FUNCTION</scope>
    <scope>SUBUNIT</scope>
    <scope>INTERACTION WITH THE MAJOR CAPSID PROTEIN</scope>
</reference>
<reference key="4">
    <citation type="journal article" date="2010" name="Virol. J.">
        <title>Structure and assembly of bacteriophage T4 head.</title>
        <authorList>
            <person name="Rao V.B."/>
            <person name="Black L.W."/>
        </authorList>
    </citation>
    <scope>REVIEW</scope>
</reference>
<reference key="5">
    <citation type="journal article" date="2010" name="Mol. Microbiol.">
        <title>Functional analysis of the highly antigenic outer capsid protein, Hoc, a virus decoration protein from T4-like bacteriophages.</title>
        <authorList>
            <person name="Sathaliyawala T."/>
            <person name="Islam M.Z."/>
            <person name="Li Q."/>
            <person name="Fokine A."/>
            <person name="Rossmann M.G."/>
            <person name="Rao V.B."/>
        </authorList>
    </citation>
    <scope>INTERACTION WITH THE MAJOR CAPSID PROTEIN</scope>
</reference>
<reference key="6">
    <citation type="journal article" date="2004" name="Proc. Natl. Acad. Sci. U.S.A.">
        <title>Molecular architecture of the prolate head of bacteriophage T4.</title>
        <authorList>
            <person name="Fokine A."/>
            <person name="Chipman P.R."/>
            <person name="Leiman P.G."/>
            <person name="Mesyanzhinov V.V."/>
            <person name="Rao V.B."/>
            <person name="Rossmann M.G."/>
        </authorList>
    </citation>
    <scope>STRUCTURE BY ELECTRON MICROSCOPY (22.0 ANGSTROMS)</scope>
    <scope>FUNCTION</scope>
    <scope>SUBCELLULAR LOCATION</scope>
</reference>
<reference key="7">
    <citation type="journal article" date="2001" name="Virology">
        <title>The structure of isometric capsids of bacteriophage T4.</title>
        <authorList>
            <person name="Olson N.H."/>
            <person name="Gingery M."/>
            <person name="Eiserling F.A."/>
            <person name="Baker T.S."/>
        </authorList>
    </citation>
    <scope>STRUCTURE BY ELECTRON MICROSCOPY (15.0 ANGSTROMS)</scope>
    <scope>INTERACTION WITH THE MAJOR CAPSID PROTEIN</scope>
    <scope>FUNCTION</scope>
    <scope>SUBCELLULAR LOCATION</scope>
</reference>
<keyword id="KW-0002">3D-structure</keyword>
<keyword id="KW-0167">Capsid protein</keyword>
<keyword id="KW-1185">Reference proteome</keyword>
<keyword id="KW-0946">Virion</keyword>
<organismHost>
    <name type="scientific">Escherichia coli</name>
    <dbReference type="NCBI Taxonomy" id="562"/>
</organismHost>
<proteinExistence type="evidence at protein level"/>
<name>HOC_BPT4</name>
<protein>
    <recommendedName>
        <fullName evidence="1">Highly immunogenic outer capsid protein</fullName>
        <shortName>Hoc</shortName>
    </recommendedName>
</protein>
<organism>
    <name type="scientific">Enterobacteria phage T4</name>
    <name type="common">Bacteriophage T4</name>
    <dbReference type="NCBI Taxonomy" id="10665"/>
    <lineage>
        <taxon>Viruses</taxon>
        <taxon>Duplodnaviria</taxon>
        <taxon>Heunggongvirae</taxon>
        <taxon>Uroviricota</taxon>
        <taxon>Caudoviricetes</taxon>
        <taxon>Straboviridae</taxon>
        <taxon>Tevenvirinae</taxon>
        <taxon>Tequatrovirus</taxon>
    </lineage>
</organism>
<feature type="chain" id="PRO_0000164945" description="Highly immunogenic outer capsid protein">
    <location>
        <begin position="1"/>
        <end position="376"/>
    </location>
</feature>
<feature type="region of interest" description="Interaction with the major capsid protein" evidence="1 5">
    <location>
        <begin position="355"/>
        <end position="359"/>
    </location>
</feature>
<feature type="strand" evidence="7">
    <location>
        <begin position="295"/>
        <end position="297"/>
    </location>
</feature>
<feature type="turn" evidence="7">
    <location>
        <begin position="298"/>
        <end position="301"/>
    </location>
</feature>
<feature type="strand" evidence="7">
    <location>
        <begin position="302"/>
        <end position="307"/>
    </location>
</feature>
<feature type="helix" evidence="6">
    <location>
        <begin position="309"/>
        <end position="318"/>
    </location>
</feature>
<feature type="turn" evidence="6">
    <location>
        <begin position="319"/>
        <end position="322"/>
    </location>
</feature>
<feature type="strand" evidence="7">
    <location>
        <begin position="325"/>
        <end position="328"/>
    </location>
</feature>
<feature type="helix" evidence="7">
    <location>
        <begin position="335"/>
        <end position="347"/>
    </location>
</feature>
<feature type="strand" evidence="7">
    <location>
        <begin position="348"/>
        <end position="350"/>
    </location>
</feature>
<feature type="strand" evidence="7">
    <location>
        <begin position="352"/>
        <end position="354"/>
    </location>
</feature>
<feature type="strand" evidence="7">
    <location>
        <begin position="356"/>
        <end position="358"/>
    </location>
</feature>
<feature type="strand" evidence="7">
    <location>
        <begin position="361"/>
        <end position="363"/>
    </location>
</feature>
<feature type="helix" evidence="7">
    <location>
        <begin position="364"/>
        <end position="368"/>
    </location>
</feature>
<feature type="strand" evidence="7">
    <location>
        <begin position="373"/>
        <end position="375"/>
    </location>
</feature>
<accession>P18056</accession>